<organism>
    <name type="scientific">Rhizobium rhizogenes (strain K84 / ATCC BAA-868)</name>
    <name type="common">Agrobacterium radiobacter</name>
    <dbReference type="NCBI Taxonomy" id="311403"/>
    <lineage>
        <taxon>Bacteria</taxon>
        <taxon>Pseudomonadati</taxon>
        <taxon>Pseudomonadota</taxon>
        <taxon>Alphaproteobacteria</taxon>
        <taxon>Hyphomicrobiales</taxon>
        <taxon>Rhizobiaceae</taxon>
        <taxon>Rhizobium/Agrobacterium group</taxon>
        <taxon>Rhizobium</taxon>
    </lineage>
</organism>
<dbReference type="EC" id="2.7.4.3" evidence="1"/>
<dbReference type="EMBL" id="CP000628">
    <property type="protein sequence ID" value="ACM26300.1"/>
    <property type="molecule type" value="Genomic_DNA"/>
</dbReference>
<dbReference type="RefSeq" id="WP_007690790.1">
    <property type="nucleotide sequence ID" value="NC_011985.1"/>
</dbReference>
<dbReference type="SMR" id="B9JDU9"/>
<dbReference type="STRING" id="311403.Arad_2002"/>
<dbReference type="KEGG" id="ara:Arad_2002"/>
<dbReference type="eggNOG" id="COG0563">
    <property type="taxonomic scope" value="Bacteria"/>
</dbReference>
<dbReference type="HOGENOM" id="CLU_032354_1_2_5"/>
<dbReference type="UniPathway" id="UPA00588">
    <property type="reaction ID" value="UER00649"/>
</dbReference>
<dbReference type="Proteomes" id="UP000001600">
    <property type="component" value="Chromosome 1"/>
</dbReference>
<dbReference type="GO" id="GO:0005737">
    <property type="term" value="C:cytoplasm"/>
    <property type="evidence" value="ECO:0007669"/>
    <property type="project" value="UniProtKB-SubCell"/>
</dbReference>
<dbReference type="GO" id="GO:0004017">
    <property type="term" value="F:adenylate kinase activity"/>
    <property type="evidence" value="ECO:0007669"/>
    <property type="project" value="UniProtKB-UniRule"/>
</dbReference>
<dbReference type="GO" id="GO:0005524">
    <property type="term" value="F:ATP binding"/>
    <property type="evidence" value="ECO:0007669"/>
    <property type="project" value="UniProtKB-UniRule"/>
</dbReference>
<dbReference type="GO" id="GO:0008270">
    <property type="term" value="F:zinc ion binding"/>
    <property type="evidence" value="ECO:0007669"/>
    <property type="project" value="UniProtKB-UniRule"/>
</dbReference>
<dbReference type="GO" id="GO:0044209">
    <property type="term" value="P:AMP salvage"/>
    <property type="evidence" value="ECO:0007669"/>
    <property type="project" value="UniProtKB-UniRule"/>
</dbReference>
<dbReference type="CDD" id="cd01428">
    <property type="entry name" value="ADK"/>
    <property type="match status" value="1"/>
</dbReference>
<dbReference type="FunFam" id="3.40.50.300:FF:000106">
    <property type="entry name" value="Adenylate kinase mitochondrial"/>
    <property type="match status" value="1"/>
</dbReference>
<dbReference type="Gene3D" id="3.40.50.300">
    <property type="entry name" value="P-loop containing nucleotide triphosphate hydrolases"/>
    <property type="match status" value="1"/>
</dbReference>
<dbReference type="HAMAP" id="MF_00235">
    <property type="entry name" value="Adenylate_kinase_Adk"/>
    <property type="match status" value="1"/>
</dbReference>
<dbReference type="InterPro" id="IPR006259">
    <property type="entry name" value="Adenyl_kin_sub"/>
</dbReference>
<dbReference type="InterPro" id="IPR000850">
    <property type="entry name" value="Adenylat/UMP-CMP_kin"/>
</dbReference>
<dbReference type="InterPro" id="IPR033690">
    <property type="entry name" value="Adenylat_kinase_CS"/>
</dbReference>
<dbReference type="InterPro" id="IPR007862">
    <property type="entry name" value="Adenylate_kinase_lid-dom"/>
</dbReference>
<dbReference type="InterPro" id="IPR027417">
    <property type="entry name" value="P-loop_NTPase"/>
</dbReference>
<dbReference type="NCBIfam" id="TIGR01351">
    <property type="entry name" value="adk"/>
    <property type="match status" value="1"/>
</dbReference>
<dbReference type="NCBIfam" id="NF001380">
    <property type="entry name" value="PRK00279.1-2"/>
    <property type="match status" value="1"/>
</dbReference>
<dbReference type="NCBIfam" id="NF001381">
    <property type="entry name" value="PRK00279.1-3"/>
    <property type="match status" value="1"/>
</dbReference>
<dbReference type="NCBIfam" id="NF011100">
    <property type="entry name" value="PRK14527.1"/>
    <property type="match status" value="1"/>
</dbReference>
<dbReference type="NCBIfam" id="NF011105">
    <property type="entry name" value="PRK14532.1"/>
    <property type="match status" value="1"/>
</dbReference>
<dbReference type="PANTHER" id="PTHR23359">
    <property type="entry name" value="NUCLEOTIDE KINASE"/>
    <property type="match status" value="1"/>
</dbReference>
<dbReference type="Pfam" id="PF00406">
    <property type="entry name" value="ADK"/>
    <property type="match status" value="1"/>
</dbReference>
<dbReference type="Pfam" id="PF05191">
    <property type="entry name" value="ADK_lid"/>
    <property type="match status" value="1"/>
</dbReference>
<dbReference type="PRINTS" id="PR00094">
    <property type="entry name" value="ADENYLTKNASE"/>
</dbReference>
<dbReference type="SUPFAM" id="SSF52540">
    <property type="entry name" value="P-loop containing nucleoside triphosphate hydrolases"/>
    <property type="match status" value="1"/>
</dbReference>
<dbReference type="PROSITE" id="PS00113">
    <property type="entry name" value="ADENYLATE_KINASE"/>
    <property type="match status" value="1"/>
</dbReference>
<protein>
    <recommendedName>
        <fullName evidence="1">Adenylate kinase</fullName>
        <shortName evidence="1">AK</shortName>
        <ecNumber evidence="1">2.7.4.3</ecNumber>
    </recommendedName>
    <alternativeName>
        <fullName evidence="1">ATP-AMP transphosphorylase</fullName>
    </alternativeName>
    <alternativeName>
        <fullName evidence="1">ATP:AMP phosphotransferase</fullName>
    </alternativeName>
    <alternativeName>
        <fullName evidence="1">Adenylate monophosphate kinase</fullName>
    </alternativeName>
</protein>
<keyword id="KW-0067">ATP-binding</keyword>
<keyword id="KW-0963">Cytoplasm</keyword>
<keyword id="KW-0418">Kinase</keyword>
<keyword id="KW-0479">Metal-binding</keyword>
<keyword id="KW-0545">Nucleotide biosynthesis</keyword>
<keyword id="KW-0547">Nucleotide-binding</keyword>
<keyword id="KW-0808">Transferase</keyword>
<keyword id="KW-0862">Zinc</keyword>
<sequence length="216" mass="23360">MRLILLGPPGAGKGTQAQRIVEKHGIPQLSTGDMLRAAVAAGTEVGKRAKAVMDAGKLVSDDIVNAIVSERIDQPDCARGFILDGFPRTLVQADATEAMLKAKGLELSAVIEIKVDDAVLADRISGRYTCANCGAGYHDENLRPKVEGVCDRCGSTHFKRRADDNRETVVERLQVYYKETSPLIGYYYAKGKLQSVDGMADIEHVTANIEAILSKL</sequence>
<reference key="1">
    <citation type="journal article" date="2009" name="J. Bacteriol.">
        <title>Genome sequences of three Agrobacterium biovars help elucidate the evolution of multichromosome genomes in bacteria.</title>
        <authorList>
            <person name="Slater S.C."/>
            <person name="Goldman B.S."/>
            <person name="Goodner B."/>
            <person name="Setubal J.C."/>
            <person name="Farrand S.K."/>
            <person name="Nester E.W."/>
            <person name="Burr T.J."/>
            <person name="Banta L."/>
            <person name="Dickerman A.W."/>
            <person name="Paulsen I."/>
            <person name="Otten L."/>
            <person name="Suen G."/>
            <person name="Welch R."/>
            <person name="Almeida N.F."/>
            <person name="Arnold F."/>
            <person name="Burton O.T."/>
            <person name="Du Z."/>
            <person name="Ewing A."/>
            <person name="Godsy E."/>
            <person name="Heisel S."/>
            <person name="Houmiel K.L."/>
            <person name="Jhaveri J."/>
            <person name="Lu J."/>
            <person name="Miller N.M."/>
            <person name="Norton S."/>
            <person name="Chen Q."/>
            <person name="Phoolcharoen W."/>
            <person name="Ohlin V."/>
            <person name="Ondrusek D."/>
            <person name="Pride N."/>
            <person name="Stricklin S.L."/>
            <person name="Sun J."/>
            <person name="Wheeler C."/>
            <person name="Wilson L."/>
            <person name="Zhu H."/>
            <person name="Wood D.W."/>
        </authorList>
    </citation>
    <scope>NUCLEOTIDE SEQUENCE [LARGE SCALE GENOMIC DNA]</scope>
    <source>
        <strain>K84 / ATCC BAA-868</strain>
    </source>
</reference>
<proteinExistence type="inferred from homology"/>
<feature type="chain" id="PRO_1000191116" description="Adenylate kinase">
    <location>
        <begin position="1"/>
        <end position="216"/>
    </location>
</feature>
<feature type="region of interest" description="NMP" evidence="1">
    <location>
        <begin position="30"/>
        <end position="59"/>
    </location>
</feature>
<feature type="region of interest" description="LID" evidence="1">
    <location>
        <begin position="126"/>
        <end position="163"/>
    </location>
</feature>
<feature type="binding site" evidence="1">
    <location>
        <begin position="10"/>
        <end position="15"/>
    </location>
    <ligand>
        <name>ATP</name>
        <dbReference type="ChEBI" id="CHEBI:30616"/>
    </ligand>
</feature>
<feature type="binding site" evidence="1">
    <location>
        <position position="31"/>
    </location>
    <ligand>
        <name>AMP</name>
        <dbReference type="ChEBI" id="CHEBI:456215"/>
    </ligand>
</feature>
<feature type="binding site" evidence="1">
    <location>
        <position position="36"/>
    </location>
    <ligand>
        <name>AMP</name>
        <dbReference type="ChEBI" id="CHEBI:456215"/>
    </ligand>
</feature>
<feature type="binding site" evidence="1">
    <location>
        <begin position="57"/>
        <end position="59"/>
    </location>
    <ligand>
        <name>AMP</name>
        <dbReference type="ChEBI" id="CHEBI:456215"/>
    </ligand>
</feature>
<feature type="binding site" evidence="1">
    <location>
        <begin position="85"/>
        <end position="88"/>
    </location>
    <ligand>
        <name>AMP</name>
        <dbReference type="ChEBI" id="CHEBI:456215"/>
    </ligand>
</feature>
<feature type="binding site" evidence="1">
    <location>
        <position position="92"/>
    </location>
    <ligand>
        <name>AMP</name>
        <dbReference type="ChEBI" id="CHEBI:456215"/>
    </ligand>
</feature>
<feature type="binding site" evidence="1">
    <location>
        <position position="127"/>
    </location>
    <ligand>
        <name>ATP</name>
        <dbReference type="ChEBI" id="CHEBI:30616"/>
    </ligand>
</feature>
<feature type="binding site" evidence="1">
    <location>
        <position position="130"/>
    </location>
    <ligand>
        <name>Zn(2+)</name>
        <dbReference type="ChEBI" id="CHEBI:29105"/>
        <note>structural</note>
    </ligand>
</feature>
<feature type="binding site" evidence="1">
    <location>
        <position position="133"/>
    </location>
    <ligand>
        <name>Zn(2+)</name>
        <dbReference type="ChEBI" id="CHEBI:29105"/>
        <note>structural</note>
    </ligand>
</feature>
<feature type="binding site" evidence="1">
    <location>
        <position position="150"/>
    </location>
    <ligand>
        <name>Zn(2+)</name>
        <dbReference type="ChEBI" id="CHEBI:29105"/>
        <note>structural</note>
    </ligand>
</feature>
<feature type="binding site" evidence="1">
    <location>
        <position position="153"/>
    </location>
    <ligand>
        <name>Zn(2+)</name>
        <dbReference type="ChEBI" id="CHEBI:29105"/>
        <note>structural</note>
    </ligand>
</feature>
<feature type="binding site" evidence="1">
    <location>
        <position position="160"/>
    </location>
    <ligand>
        <name>AMP</name>
        <dbReference type="ChEBI" id="CHEBI:456215"/>
    </ligand>
</feature>
<feature type="binding site" evidence="1">
    <location>
        <position position="172"/>
    </location>
    <ligand>
        <name>AMP</name>
        <dbReference type="ChEBI" id="CHEBI:456215"/>
    </ligand>
</feature>
<feature type="binding site" evidence="1">
    <location>
        <position position="200"/>
    </location>
    <ligand>
        <name>ATP</name>
        <dbReference type="ChEBI" id="CHEBI:30616"/>
    </ligand>
</feature>
<name>KAD_RHIR8</name>
<comment type="function">
    <text evidence="1">Catalyzes the reversible transfer of the terminal phosphate group between ATP and AMP. Plays an important role in cellular energy homeostasis and in adenine nucleotide metabolism.</text>
</comment>
<comment type="catalytic activity">
    <reaction evidence="1">
        <text>AMP + ATP = 2 ADP</text>
        <dbReference type="Rhea" id="RHEA:12973"/>
        <dbReference type="ChEBI" id="CHEBI:30616"/>
        <dbReference type="ChEBI" id="CHEBI:456215"/>
        <dbReference type="ChEBI" id="CHEBI:456216"/>
        <dbReference type="EC" id="2.7.4.3"/>
    </reaction>
</comment>
<comment type="pathway">
    <text evidence="1">Purine metabolism; AMP biosynthesis via salvage pathway; AMP from ADP: step 1/1.</text>
</comment>
<comment type="subunit">
    <text evidence="1">Monomer.</text>
</comment>
<comment type="subcellular location">
    <subcellularLocation>
        <location evidence="1">Cytoplasm</location>
    </subcellularLocation>
</comment>
<comment type="domain">
    <text evidence="1">Consists of three domains, a large central CORE domain and two small peripheral domains, NMPbind and LID, which undergo movements during catalysis. The LID domain closes over the site of phosphoryl transfer upon ATP binding. Assembling and dissambling the active center during each catalytic cycle provides an effective means to prevent ATP hydrolysis. Some bacteria have evolved a zinc-coordinating structure that stabilizes the LID domain.</text>
</comment>
<comment type="similarity">
    <text evidence="1">Belongs to the adenylate kinase family.</text>
</comment>
<accession>B9JDU9</accession>
<evidence type="ECO:0000255" key="1">
    <source>
        <dbReference type="HAMAP-Rule" id="MF_00235"/>
    </source>
</evidence>
<gene>
    <name evidence="1" type="primary">adk</name>
    <name type="ordered locus">Arad_2002</name>
</gene>